<keyword id="KW-0227">DNA damage</keyword>
<keyword id="KW-0234">DNA repair</keyword>
<keyword id="KW-0255">Endonuclease</keyword>
<keyword id="KW-0378">Hydrolase</keyword>
<keyword id="KW-0479">Metal-binding</keyword>
<keyword id="KW-0540">Nuclease</keyword>
<keyword id="KW-1185">Reference proteome</keyword>
<keyword id="KW-0862">Zinc</keyword>
<organism>
    <name type="scientific">Haloquadratum walsbyi (strain DSM 16790 / HBSQ001)</name>
    <dbReference type="NCBI Taxonomy" id="362976"/>
    <lineage>
        <taxon>Archaea</taxon>
        <taxon>Methanobacteriati</taxon>
        <taxon>Methanobacteriota</taxon>
        <taxon>Stenosarchaea group</taxon>
        <taxon>Halobacteria</taxon>
        <taxon>Halobacteriales</taxon>
        <taxon>Haloferacaceae</taxon>
        <taxon>Haloquadratum</taxon>
    </lineage>
</organism>
<dbReference type="EC" id="3.1.21.2" evidence="1"/>
<dbReference type="EMBL" id="AM180088">
    <property type="protein sequence ID" value="CAJ51545.1"/>
    <property type="molecule type" value="Genomic_DNA"/>
</dbReference>
<dbReference type="RefSeq" id="WP_011570700.1">
    <property type="nucleotide sequence ID" value="NC_008212.1"/>
</dbReference>
<dbReference type="SMR" id="Q18KA6"/>
<dbReference type="STRING" id="362976.HQ_1417A"/>
<dbReference type="GeneID" id="4194344"/>
<dbReference type="KEGG" id="hwa:HQ_1417A"/>
<dbReference type="eggNOG" id="arCOG01894">
    <property type="taxonomic scope" value="Archaea"/>
</dbReference>
<dbReference type="HOGENOM" id="CLU_025885_0_1_2"/>
<dbReference type="Proteomes" id="UP000001975">
    <property type="component" value="Chromosome"/>
</dbReference>
<dbReference type="GO" id="GO:0008833">
    <property type="term" value="F:deoxyribonuclease IV (phage-T4-induced) activity"/>
    <property type="evidence" value="ECO:0007669"/>
    <property type="project" value="UniProtKB-UniRule"/>
</dbReference>
<dbReference type="GO" id="GO:0003677">
    <property type="term" value="F:DNA binding"/>
    <property type="evidence" value="ECO:0007669"/>
    <property type="project" value="InterPro"/>
</dbReference>
<dbReference type="GO" id="GO:0003906">
    <property type="term" value="F:DNA-(apurinic or apyrimidinic site) endonuclease activity"/>
    <property type="evidence" value="ECO:0007669"/>
    <property type="project" value="TreeGrafter"/>
</dbReference>
<dbReference type="GO" id="GO:0008081">
    <property type="term" value="F:phosphoric diester hydrolase activity"/>
    <property type="evidence" value="ECO:0007669"/>
    <property type="project" value="TreeGrafter"/>
</dbReference>
<dbReference type="GO" id="GO:0008270">
    <property type="term" value="F:zinc ion binding"/>
    <property type="evidence" value="ECO:0007669"/>
    <property type="project" value="UniProtKB-UniRule"/>
</dbReference>
<dbReference type="GO" id="GO:0006284">
    <property type="term" value="P:base-excision repair"/>
    <property type="evidence" value="ECO:0007669"/>
    <property type="project" value="TreeGrafter"/>
</dbReference>
<dbReference type="CDD" id="cd00019">
    <property type="entry name" value="AP2Ec"/>
    <property type="match status" value="1"/>
</dbReference>
<dbReference type="FunFam" id="3.20.20.150:FF:000001">
    <property type="entry name" value="Probable endonuclease 4"/>
    <property type="match status" value="1"/>
</dbReference>
<dbReference type="Gene3D" id="3.20.20.150">
    <property type="entry name" value="Divalent-metal-dependent TIM barrel enzymes"/>
    <property type="match status" value="1"/>
</dbReference>
<dbReference type="HAMAP" id="MF_00152">
    <property type="entry name" value="Nfo"/>
    <property type="match status" value="1"/>
</dbReference>
<dbReference type="InterPro" id="IPR001719">
    <property type="entry name" value="AP_endonuc_2"/>
</dbReference>
<dbReference type="InterPro" id="IPR018246">
    <property type="entry name" value="AP_endonuc_F2_Zn_BS"/>
</dbReference>
<dbReference type="InterPro" id="IPR036237">
    <property type="entry name" value="Xyl_isomerase-like_sf"/>
</dbReference>
<dbReference type="InterPro" id="IPR013022">
    <property type="entry name" value="Xyl_isomerase-like_TIM-brl"/>
</dbReference>
<dbReference type="NCBIfam" id="TIGR00587">
    <property type="entry name" value="nfo"/>
    <property type="match status" value="1"/>
</dbReference>
<dbReference type="PANTHER" id="PTHR21445:SF0">
    <property type="entry name" value="APURINIC-APYRIMIDINIC ENDONUCLEASE"/>
    <property type="match status" value="1"/>
</dbReference>
<dbReference type="PANTHER" id="PTHR21445">
    <property type="entry name" value="ENDONUCLEASE IV ENDODEOXYRIBONUCLEASE IV"/>
    <property type="match status" value="1"/>
</dbReference>
<dbReference type="Pfam" id="PF01261">
    <property type="entry name" value="AP_endonuc_2"/>
    <property type="match status" value="1"/>
</dbReference>
<dbReference type="SMART" id="SM00518">
    <property type="entry name" value="AP2Ec"/>
    <property type="match status" value="1"/>
</dbReference>
<dbReference type="SUPFAM" id="SSF51658">
    <property type="entry name" value="Xylose isomerase-like"/>
    <property type="match status" value="1"/>
</dbReference>
<dbReference type="PROSITE" id="PS00731">
    <property type="entry name" value="AP_NUCLEASE_F2_3"/>
    <property type="match status" value="1"/>
</dbReference>
<dbReference type="PROSITE" id="PS51432">
    <property type="entry name" value="AP_NUCLEASE_F2_4"/>
    <property type="match status" value="1"/>
</dbReference>
<sequence length="278" mass="29741">MLVGAHESIAGGVANAVDRQLENGGNCGQIFTHSPQVWQDPSIDDTDAEAFRDRSQMHDIGPWVIHSSYLVNLCTPKDDLRAKSIDSMQQEVDAAAQLSIPYVNVHLGAHTGAGKQQGLDNAISALDELTIPDSVTVLLESDAGSGTKLGNKFDHLAYVLEESTHELEVCLDTAHVFAAGYDLSTPAAVNTTIKEFDTTVGVDNLACVHLNDSKHACGTNKDEHAHIGEGKIGESGMEAFINHSAIDPIPLVLETPNENGKGFAWNIDRVQNLAENPA</sequence>
<proteinExistence type="inferred from homology"/>
<comment type="function">
    <text evidence="1">Endonuclease IV plays a role in DNA repair. It cleaves phosphodiester bonds at apurinic or apyrimidinic (AP) sites, generating a 3'-hydroxyl group and a 5'-terminal sugar phosphate.</text>
</comment>
<comment type="catalytic activity">
    <reaction evidence="1">
        <text>Endonucleolytic cleavage to 5'-phosphooligonucleotide end-products.</text>
        <dbReference type="EC" id="3.1.21.2"/>
    </reaction>
</comment>
<comment type="cofactor">
    <cofactor evidence="1">
        <name>Zn(2+)</name>
        <dbReference type="ChEBI" id="CHEBI:29105"/>
    </cofactor>
    <text evidence="1">Binds 3 Zn(2+) ions.</text>
</comment>
<comment type="similarity">
    <text evidence="1">Belongs to the AP endonuclease 2 family.</text>
</comment>
<reference key="1">
    <citation type="journal article" date="2006" name="BMC Genomics">
        <title>The genome of the square archaeon Haloquadratum walsbyi: life at the limits of water activity.</title>
        <authorList>
            <person name="Bolhuis H."/>
            <person name="Palm P."/>
            <person name="Wende A."/>
            <person name="Falb M."/>
            <person name="Rampp M."/>
            <person name="Rodriguez-Valera F."/>
            <person name="Pfeiffer F."/>
            <person name="Oesterhelt D."/>
        </authorList>
    </citation>
    <scope>NUCLEOTIDE SEQUENCE [LARGE SCALE GENOMIC DNA]</scope>
    <source>
        <strain>DSM 16790 / HBSQ001</strain>
    </source>
</reference>
<protein>
    <recommendedName>
        <fullName evidence="1">Probable endonuclease 4</fullName>
        <ecNumber evidence="1">3.1.21.2</ecNumber>
    </recommendedName>
    <alternativeName>
        <fullName evidence="1">Endodeoxyribonuclease IV</fullName>
    </alternativeName>
    <alternativeName>
        <fullName evidence="1">Endonuclease IV</fullName>
    </alternativeName>
</protein>
<name>END4_HALWD</name>
<accession>Q18KA6</accession>
<gene>
    <name evidence="1" type="primary">nfo</name>
    <name type="ordered locus">HQ_1417A</name>
</gene>
<evidence type="ECO:0000255" key="1">
    <source>
        <dbReference type="HAMAP-Rule" id="MF_00152"/>
    </source>
</evidence>
<feature type="chain" id="PRO_1000011309" description="Probable endonuclease 4">
    <location>
        <begin position="1"/>
        <end position="278"/>
    </location>
</feature>
<feature type="binding site" evidence="1">
    <location>
        <position position="66"/>
    </location>
    <ligand>
        <name>Zn(2+)</name>
        <dbReference type="ChEBI" id="CHEBI:29105"/>
        <label>1</label>
    </ligand>
</feature>
<feature type="binding site" evidence="1">
    <location>
        <position position="106"/>
    </location>
    <ligand>
        <name>Zn(2+)</name>
        <dbReference type="ChEBI" id="CHEBI:29105"/>
        <label>1</label>
    </ligand>
</feature>
<feature type="binding site" evidence="1">
    <location>
        <position position="140"/>
    </location>
    <ligand>
        <name>Zn(2+)</name>
        <dbReference type="ChEBI" id="CHEBI:29105"/>
        <label>1</label>
    </ligand>
</feature>
<feature type="binding site" evidence="1">
    <location>
        <position position="140"/>
    </location>
    <ligand>
        <name>Zn(2+)</name>
        <dbReference type="ChEBI" id="CHEBI:29105"/>
        <label>2</label>
    </ligand>
</feature>
<feature type="binding site" evidence="1">
    <location>
        <position position="172"/>
    </location>
    <ligand>
        <name>Zn(2+)</name>
        <dbReference type="ChEBI" id="CHEBI:29105"/>
        <label>2</label>
    </ligand>
</feature>
<feature type="binding site" evidence="1">
    <location>
        <position position="175"/>
    </location>
    <ligand>
        <name>Zn(2+)</name>
        <dbReference type="ChEBI" id="CHEBI:29105"/>
        <label>3</label>
    </ligand>
</feature>
<feature type="binding site" evidence="1">
    <location>
        <position position="209"/>
    </location>
    <ligand>
        <name>Zn(2+)</name>
        <dbReference type="ChEBI" id="CHEBI:29105"/>
        <label>2</label>
    </ligand>
</feature>
<feature type="binding site" evidence="1">
    <location>
        <position position="222"/>
    </location>
    <ligand>
        <name>Zn(2+)</name>
        <dbReference type="ChEBI" id="CHEBI:29105"/>
        <label>3</label>
    </ligand>
</feature>
<feature type="binding site" evidence="1">
    <location>
        <position position="224"/>
    </location>
    <ligand>
        <name>Zn(2+)</name>
        <dbReference type="ChEBI" id="CHEBI:29105"/>
        <label>3</label>
    </ligand>
</feature>
<feature type="binding site" evidence="1">
    <location>
        <position position="254"/>
    </location>
    <ligand>
        <name>Zn(2+)</name>
        <dbReference type="ChEBI" id="CHEBI:29105"/>
        <label>2</label>
    </ligand>
</feature>